<gene>
    <name type="ORF">ORF3a</name>
</gene>
<keyword id="KW-1031">Host cell junction</keyword>
<keyword id="KW-0813">Transport</keyword>
<keyword id="KW-0916">Viral movement protein</keyword>
<reference key="1">
    <citation type="journal article" date="1982" name="Eur. J. Biochem.">
        <title>Cucumber mosaic virus RNA 3. Determination of the nucleotide sequence provides the amino acid sequences of protein 3A and viral coat protein.</title>
        <authorList>
            <person name="Gould A.R."/>
            <person name="Symons R.H."/>
        </authorList>
    </citation>
    <scope>NUCLEOTIDE SEQUENCE [GENOMIC RNA]</scope>
</reference>
<reference key="2">
    <citation type="journal article" date="1988" name="Virology">
        <title>Further implications for the evolutionary relationships between tripartite plant viruses based on cucumber mosaic virus RNA 3.</title>
        <authorList>
            <person name="Davies C."/>
            <person name="Symons R.H."/>
        </authorList>
    </citation>
    <scope>NUCLEOTIDE SEQUENCE [GENOMIC RNA]</scope>
    <scope>SEQUENCE REVISION</scope>
</reference>
<dbReference type="EMBL" id="J02059">
    <property type="protein sequence ID" value="AAA46413.1"/>
    <property type="status" value="ALT_FRAME"/>
    <property type="molecule type" value="Genomic_RNA"/>
</dbReference>
<dbReference type="EMBL" id="M21464">
    <property type="protein sequence ID" value="AAA46415.1"/>
    <property type="molecule type" value="Genomic_RNA"/>
</dbReference>
<dbReference type="PIR" id="JA0107">
    <property type="entry name" value="P3VXUV"/>
</dbReference>
<dbReference type="Proteomes" id="UP000008454">
    <property type="component" value="Genome"/>
</dbReference>
<dbReference type="GO" id="GO:0044219">
    <property type="term" value="C:host cell plasmodesma"/>
    <property type="evidence" value="ECO:0007669"/>
    <property type="project" value="UniProtKB-SubCell"/>
</dbReference>
<dbReference type="GO" id="GO:0046740">
    <property type="term" value="P:transport of virus in host, cell to cell"/>
    <property type="evidence" value="ECO:0007669"/>
    <property type="project" value="UniProtKB-KW"/>
</dbReference>
<dbReference type="InterPro" id="IPR000603">
    <property type="entry name" value="MPV"/>
</dbReference>
<dbReference type="Pfam" id="PF00803">
    <property type="entry name" value="3A"/>
    <property type="match status" value="1"/>
</dbReference>
<evidence type="ECO:0000250" key="1"/>
<evidence type="ECO:0000256" key="2">
    <source>
        <dbReference type="SAM" id="MobiDB-lite"/>
    </source>
</evidence>
<evidence type="ECO:0000305" key="3"/>
<sequence>MAFQGPSRTLTQQSSAASSDDLQKILFSPDAIKKMATECDLGRHHWMRADNAISVRPLVPQVTSNNLLPFFKSGYDAGELRSKGYMSVPQVLCAVTRTVSTDAEGSLKIYLADLGDKELSPIDGQCVTLHNHELPALISFQPTYDCPMELVGNRHRCFAVVVERHGYIGYGGTTASVCSNWQAQFSSKNNNYTHAAAGKTLVLPYNRLAEHSKPSAVARLLKSQLNNVSSSRYLLPNVALNQNASGHESEILKESPPIAIGSPSASRNNSFRSQVVNGL</sequence>
<feature type="chain" id="PRO_0000083247" description="Movement protein">
    <location>
        <begin position="1"/>
        <end position="279"/>
    </location>
</feature>
<feature type="region of interest" description="Disordered" evidence="2">
    <location>
        <begin position="256"/>
        <end position="279"/>
    </location>
</feature>
<feature type="compositionally biased region" description="Low complexity" evidence="2">
    <location>
        <begin position="256"/>
        <end position="266"/>
    </location>
</feature>
<feature type="compositionally biased region" description="Polar residues" evidence="2">
    <location>
        <begin position="267"/>
        <end position="279"/>
    </location>
</feature>
<accession>P03604</accession>
<accession>Q83266</accession>
<proteinExistence type="inferred from homology"/>
<organismHost>
    <name type="scientific">Cucumis sativus</name>
    <name type="common">Cucumber</name>
    <dbReference type="NCBI Taxonomy" id="3659"/>
</organismHost>
<organismHost>
    <name type="scientific">Nicotiana tabacum</name>
    <name type="common">Common tobacco</name>
    <dbReference type="NCBI Taxonomy" id="4097"/>
</organismHost>
<organismHost>
    <name type="scientific">Solanum lycopersicum</name>
    <name type="common">Tomato</name>
    <name type="synonym">Lycopersicon esculentum</name>
    <dbReference type="NCBI Taxonomy" id="4081"/>
</organismHost>
<name>MVP_CMVQ</name>
<comment type="function">
    <text evidence="1">Transports viral genome to neighboring plant cells directly through plasmosdesmata, without any budding. The movement protein allows efficient cell to cell propagation, by bypassing the host cell wall barrier. Acts by forming a tubular structure at the host plasmodesmata, enlarging it enough to allow free passage of virion capsids (By similarity).</text>
</comment>
<comment type="subcellular location">
    <subcellularLocation>
        <location evidence="1">Host cell junction</location>
        <location evidence="1">Host plasmodesma</location>
    </subcellularLocation>
    <text evidence="1">Assembles into long tubular structures at the surface of the infected protoplast.</text>
</comment>
<comment type="similarity">
    <text evidence="3">Belongs to the cucumovirus movement protein family.</text>
</comment>
<comment type="sequence caution" evidence="3">
    <conflict type="frameshift">
        <sequence resource="EMBL-CDS" id="AAA46413"/>
    </conflict>
</comment>
<protein>
    <recommendedName>
        <fullName>Movement protein</fullName>
        <shortName>MP</shortName>
    </recommendedName>
    <alternativeName>
        <fullName>Protein 3A</fullName>
    </alternativeName>
</protein>
<organism>
    <name type="scientific">Cucumber mosaic virus (strain Q)</name>
    <name type="common">CMV</name>
    <dbReference type="NCBI Taxonomy" id="12310"/>
    <lineage>
        <taxon>Viruses</taxon>
        <taxon>Riboviria</taxon>
        <taxon>Orthornavirae</taxon>
        <taxon>Kitrinoviricota</taxon>
        <taxon>Alsuviricetes</taxon>
        <taxon>Martellivirales</taxon>
        <taxon>Bromoviridae</taxon>
        <taxon>Cucumovirus</taxon>
        <taxon>Cucumber mosaic virus</taxon>
    </lineage>
</organism>